<reference key="1">
    <citation type="journal article" date="1993" name="Gene">
        <title>Cloning, sequencing and regulation of an mRNA encoding porcine interleukin-1 beta.</title>
        <authorList>
            <person name="Huether M.J."/>
            <person name="Lin G."/>
            <person name="Smith D.M."/>
            <person name="Murtaugh M.P."/>
            <person name="Molitor T.W."/>
        </authorList>
    </citation>
    <scope>NUCLEOTIDE SEQUENCE [MRNA]</scope>
</reference>
<reference key="2">
    <citation type="journal article" date="2018" name="Virus Res.">
        <title>The L83L ORF of African swine fever virus strain Georgia encodes for a non-essential gene that interacts with the host protein IL-1beta.</title>
        <authorList>
            <person name="Borca M.V."/>
            <person name="O'Donnell V."/>
            <person name="Holinka L.G."/>
            <person name="Ramirez-Medina E."/>
            <person name="Clark B.A."/>
            <person name="Vuono E.A."/>
            <person name="Berggren K."/>
            <person name="Alfano M."/>
            <person name="Carey L.B."/>
            <person name="Richt J.A."/>
            <person name="Risatti G.R."/>
            <person name="Gladue D.P."/>
        </authorList>
    </citation>
    <scope>INTERACTION WITH ASFV L83L</scope>
</reference>
<comment type="function">
    <text evidence="2">Potent pro-inflammatory cytokine. Initially discovered as the major endogenous pyrogen, induces prostaglandin synthesis, neutrophil influx and activation, T-cell activation and cytokine production, B-cell activation and antibody production, and fibroblast proliferation and collagen production. Promotes Th17 differentiation of T-cells. Synergizes with IL12/interleukin-12 to induce IFNG synthesis from T-helper 1 (Th1) cells. Plays a role in angiogenesis by inducing VEGF production synergistically with TNF and IL6. Involved in transduction of inflammation downstream of pyroptosis: its mature form is specifically released in the extracellular milieu by passing through the gasdermin-D (GSDMD) pore.</text>
</comment>
<comment type="subunit">
    <text evidence="4">(Microbial infection) Interacts with African swine fever virus (ASFV) protein L83L.</text>
</comment>
<comment type="subunit">
    <text evidence="2">Monomer. In its precursor form, weakly interacts with full-length MEFV; the mature cytokine does not interact at all. Interacts with integrins ITGAV:ITGBV and ITGA5:ITGB1; integrin-binding is required for IL1B signaling. Interacts with cargo receptor TMED10; the interaction is direct and is required for the secretion of IL1B mature form. Interacts with HSP90AB1; the interaction facilitates cargo translocation into the ERGIC. Interacts with HSP90B1; the interaction facilitates cargo translocation into the ERGIC.</text>
</comment>
<comment type="subcellular location">
    <subcellularLocation>
        <location evidence="2">Cytoplasm</location>
        <location evidence="2">Cytosol</location>
    </subcellularLocation>
    <subcellularLocation>
        <location evidence="2">Secreted</location>
    </subcellularLocation>
    <subcellularLocation>
        <location evidence="2">Lysosome</location>
    </subcellularLocation>
    <subcellularLocation>
        <location evidence="3">Secreted</location>
        <location evidence="3">Extracellular exosome</location>
    </subcellularLocation>
    <text evidence="2">The precursor is cytosolic. In response to inflammasome-activating signals, such as ATP for NLRP3 inflammasome or bacterial flagellin for NLRC4 inflammasome, cleaved and secreted. Mature form is secreted and released in the extracellular milieu by passing through the gasdermin-D (GSDMD) pore. In contrast, the precursor form is not released, due to the presence of an acidic region that is proteolytically removed by CASP1 during maturation. The secretion is dependent on protein unfolding and facilitated by the cargo receptor TMED10.</text>
</comment>
<comment type="miscellaneous">
    <text evidence="1">IL1B production occurs in 2 steps, each being controlled by different stimuli. First, inflammatory signals, such as LPS, stimulate the synthesis and promote the accumulation of cytosolic stores of pro-IL1B (priming). Then additional signals are required for inflammasome assembly, leading to CASP1 activation, pro-IL1B processing and eventually secretion of the active cytokine. IL1B processing and secretion are temporarily associated.</text>
</comment>
<comment type="similarity">
    <text evidence="5">Belongs to the IL-1 family.</text>
</comment>
<organism>
    <name type="scientific">Sus scrofa</name>
    <name type="common">Pig</name>
    <dbReference type="NCBI Taxonomy" id="9823"/>
    <lineage>
        <taxon>Eukaryota</taxon>
        <taxon>Metazoa</taxon>
        <taxon>Chordata</taxon>
        <taxon>Craniata</taxon>
        <taxon>Vertebrata</taxon>
        <taxon>Euteleostomi</taxon>
        <taxon>Mammalia</taxon>
        <taxon>Eutheria</taxon>
        <taxon>Laurasiatheria</taxon>
        <taxon>Artiodactyla</taxon>
        <taxon>Suina</taxon>
        <taxon>Suidae</taxon>
        <taxon>Sus</taxon>
    </lineage>
</organism>
<sequence length="267" mass="30404">MAIVPEPAKEVMANYGDNNNDLLFEADGPKEMKCCTQNLDLGSLRNGSIQLQISHQLWNKSIRQMVSVIVAVEKPMKNPSSQAFCDDDQKSIFSFIFEEEPIILETCNDDFVCDANVQSMECKLQDKDHKSLVLAGPHMLKALHLLTGDLKREVVFCMSFVQGDDSNNKIPVTLGIKGKNLYLSCVMKDNTPTLQLEDIDPKRYPKRDMEKRFVFYKTEIKNRVEFESALYPNWYISTSQAEQKPVFLGNSKGRQDITDFTMEVLSP</sequence>
<evidence type="ECO:0000250" key="1"/>
<evidence type="ECO:0000250" key="2">
    <source>
        <dbReference type="UniProtKB" id="P01584"/>
    </source>
</evidence>
<evidence type="ECO:0000250" key="3">
    <source>
        <dbReference type="UniProtKB" id="P10749"/>
    </source>
</evidence>
<evidence type="ECO:0000269" key="4">
    <source>
    </source>
</evidence>
<evidence type="ECO:0000305" key="5"/>
<name>IL1B_PIG</name>
<dbReference type="EMBL" id="M86725">
    <property type="protein sequence ID" value="AAA02584.1"/>
    <property type="molecule type" value="mRNA"/>
</dbReference>
<dbReference type="PIR" id="JN0724">
    <property type="entry name" value="JN0724"/>
</dbReference>
<dbReference type="RefSeq" id="NP_999220.1">
    <property type="nucleotide sequence ID" value="NM_214055.1"/>
</dbReference>
<dbReference type="SMR" id="P26889"/>
<dbReference type="FunCoup" id="P26889">
    <property type="interactions" value="461"/>
</dbReference>
<dbReference type="STRING" id="9823.ENSSSCP00000044922"/>
<dbReference type="PaxDb" id="9823-ENSSSCP00000008636"/>
<dbReference type="Ensembl" id="ENSSSCT00000062058.4">
    <property type="protein sequence ID" value="ENSSSCP00000044922.1"/>
    <property type="gene ID" value="ENSSSCG00000039214.4"/>
</dbReference>
<dbReference type="Ensembl" id="ENSSSCT00060081761.1">
    <property type="protein sequence ID" value="ENSSSCP00060035415.1"/>
    <property type="gene ID" value="ENSSSCG00060059921.1"/>
</dbReference>
<dbReference type="Ensembl" id="ENSSSCT00070040964.1">
    <property type="protein sequence ID" value="ENSSSCP00070034382.1"/>
    <property type="gene ID" value="ENSSSCG00070020471.1"/>
</dbReference>
<dbReference type="Ensembl" id="ENSSSCT00070041049.1">
    <property type="protein sequence ID" value="ENSSSCP00070034458.1"/>
    <property type="gene ID" value="ENSSSCG00070020471.1"/>
</dbReference>
<dbReference type="Ensembl" id="ENSSSCT00090056192">
    <property type="protein sequence ID" value="ENSSSCP00090035091"/>
    <property type="gene ID" value="ENSSSCG00090031745"/>
</dbReference>
<dbReference type="Ensembl" id="ENSSSCT00105046202">
    <property type="protein sequence ID" value="ENSSSCP00105032172"/>
    <property type="gene ID" value="ENSSSCG00105024441"/>
</dbReference>
<dbReference type="GeneID" id="397122"/>
<dbReference type="KEGG" id="ssc:397122"/>
<dbReference type="CTD" id="3553"/>
<dbReference type="eggNOG" id="ENOG502S3E9">
    <property type="taxonomic scope" value="Eukaryota"/>
</dbReference>
<dbReference type="GeneTree" id="ENSGT00950000182943"/>
<dbReference type="HOGENOM" id="CLU_083639_0_0_1"/>
<dbReference type="InParanoid" id="P26889"/>
<dbReference type="OMA" id="QKCLVMS"/>
<dbReference type="OrthoDB" id="9449069at2759"/>
<dbReference type="TreeFam" id="TF300203"/>
<dbReference type="Reactome" id="R-SSC-448706">
    <property type="pathway name" value="Interleukin-1 processing"/>
</dbReference>
<dbReference type="Reactome" id="R-SSC-5620971">
    <property type="pathway name" value="Pyroptosis"/>
</dbReference>
<dbReference type="Reactome" id="R-SSC-5660668">
    <property type="pathway name" value="CLEC7A/inflammasome pathway"/>
</dbReference>
<dbReference type="Reactome" id="R-SSC-9020702">
    <property type="pathway name" value="Interleukin-1 signaling"/>
</dbReference>
<dbReference type="Proteomes" id="UP000008227">
    <property type="component" value="Chromosome 3"/>
</dbReference>
<dbReference type="Proteomes" id="UP000314985">
    <property type="component" value="Chromosome 3"/>
</dbReference>
<dbReference type="Proteomes" id="UP000694570">
    <property type="component" value="Unplaced"/>
</dbReference>
<dbReference type="Proteomes" id="UP000694571">
    <property type="component" value="Unplaced"/>
</dbReference>
<dbReference type="Proteomes" id="UP000694720">
    <property type="component" value="Unplaced"/>
</dbReference>
<dbReference type="Proteomes" id="UP000694722">
    <property type="component" value="Unplaced"/>
</dbReference>
<dbReference type="Proteomes" id="UP000694723">
    <property type="component" value="Unplaced"/>
</dbReference>
<dbReference type="Proteomes" id="UP000694724">
    <property type="component" value="Unplaced"/>
</dbReference>
<dbReference type="Proteomes" id="UP000694725">
    <property type="component" value="Unplaced"/>
</dbReference>
<dbReference type="Proteomes" id="UP000694726">
    <property type="component" value="Unplaced"/>
</dbReference>
<dbReference type="Proteomes" id="UP000694727">
    <property type="component" value="Unplaced"/>
</dbReference>
<dbReference type="Proteomes" id="UP000694728">
    <property type="component" value="Unplaced"/>
</dbReference>
<dbReference type="Bgee" id="ENSSSCG00000039214">
    <property type="expression patterns" value="Expressed in blood and 19 other cell types or tissues"/>
</dbReference>
<dbReference type="GO" id="GO:0005829">
    <property type="term" value="C:cytosol"/>
    <property type="evidence" value="ECO:0007669"/>
    <property type="project" value="UniProtKB-SubCell"/>
</dbReference>
<dbReference type="GO" id="GO:0005615">
    <property type="term" value="C:extracellular space"/>
    <property type="evidence" value="ECO:0000318"/>
    <property type="project" value="GO_Central"/>
</dbReference>
<dbReference type="GO" id="GO:0005764">
    <property type="term" value="C:lysosome"/>
    <property type="evidence" value="ECO:0007669"/>
    <property type="project" value="UniProtKB-SubCell"/>
</dbReference>
<dbReference type="GO" id="GO:0005125">
    <property type="term" value="F:cytokine activity"/>
    <property type="evidence" value="ECO:0000318"/>
    <property type="project" value="GO_Central"/>
</dbReference>
<dbReference type="GO" id="GO:0005178">
    <property type="term" value="F:integrin binding"/>
    <property type="evidence" value="ECO:0000250"/>
    <property type="project" value="UniProtKB"/>
</dbReference>
<dbReference type="GO" id="GO:0005149">
    <property type="term" value="F:interleukin-1 receptor binding"/>
    <property type="evidence" value="ECO:0007669"/>
    <property type="project" value="InterPro"/>
</dbReference>
<dbReference type="GO" id="GO:0071222">
    <property type="term" value="P:cellular response to lipopolysaccharide"/>
    <property type="evidence" value="ECO:0000318"/>
    <property type="project" value="GO_Central"/>
</dbReference>
<dbReference type="GO" id="GO:0019221">
    <property type="term" value="P:cytokine-mediated signaling pathway"/>
    <property type="evidence" value="ECO:0000318"/>
    <property type="project" value="GO_Central"/>
</dbReference>
<dbReference type="GO" id="GO:0001660">
    <property type="term" value="P:fever generation"/>
    <property type="evidence" value="ECO:0007669"/>
    <property type="project" value="UniProtKB-KW"/>
</dbReference>
<dbReference type="GO" id="GO:0006955">
    <property type="term" value="P:immune response"/>
    <property type="evidence" value="ECO:0000318"/>
    <property type="project" value="GO_Central"/>
</dbReference>
<dbReference type="GO" id="GO:0006954">
    <property type="term" value="P:inflammatory response"/>
    <property type="evidence" value="ECO:0000318"/>
    <property type="project" value="GO_Central"/>
</dbReference>
<dbReference type="GO" id="GO:0043123">
    <property type="term" value="P:positive regulation of canonical NF-kappaB signal transduction"/>
    <property type="evidence" value="ECO:0000318"/>
    <property type="project" value="GO_Central"/>
</dbReference>
<dbReference type="GO" id="GO:0051781">
    <property type="term" value="P:positive regulation of cell division"/>
    <property type="evidence" value="ECO:0007669"/>
    <property type="project" value="UniProtKB-KW"/>
</dbReference>
<dbReference type="GO" id="GO:2000866">
    <property type="term" value="P:positive regulation of estradiol secretion"/>
    <property type="evidence" value="ECO:0000314"/>
    <property type="project" value="CACAO"/>
</dbReference>
<dbReference type="GO" id="GO:0033092">
    <property type="term" value="P:positive regulation of immature T cell proliferation in thymus"/>
    <property type="evidence" value="ECO:0000318"/>
    <property type="project" value="GO_Central"/>
</dbReference>
<dbReference type="GO" id="GO:2000556">
    <property type="term" value="P:positive regulation of T-helper 1 cell cytokine production"/>
    <property type="evidence" value="ECO:0000250"/>
    <property type="project" value="UniProtKB"/>
</dbReference>
<dbReference type="GO" id="GO:0032729">
    <property type="term" value="P:positive regulation of type II interferon production"/>
    <property type="evidence" value="ECO:0000250"/>
    <property type="project" value="UniProtKB"/>
</dbReference>
<dbReference type="GO" id="GO:0070372">
    <property type="term" value="P:regulation of ERK1 and ERK2 cascade"/>
    <property type="evidence" value="ECO:0000318"/>
    <property type="project" value="GO_Central"/>
</dbReference>
<dbReference type="GO" id="GO:0010573">
    <property type="term" value="P:vascular endothelial growth factor production"/>
    <property type="evidence" value="ECO:0000250"/>
    <property type="project" value="UniProtKB"/>
</dbReference>
<dbReference type="CDD" id="cd23296">
    <property type="entry name" value="beta-trefoil_IL1B"/>
    <property type="match status" value="1"/>
</dbReference>
<dbReference type="FunFam" id="2.80.10.50:FF:000027">
    <property type="entry name" value="Interleukin-1 beta"/>
    <property type="match status" value="1"/>
</dbReference>
<dbReference type="Gene3D" id="2.80.10.50">
    <property type="match status" value="1"/>
</dbReference>
<dbReference type="InterPro" id="IPR020877">
    <property type="entry name" value="IL-1_CS"/>
</dbReference>
<dbReference type="InterPro" id="IPR000975">
    <property type="entry name" value="IL-1_fam"/>
</dbReference>
<dbReference type="InterPro" id="IPR003502">
    <property type="entry name" value="IL-1_propep"/>
</dbReference>
<dbReference type="InterPro" id="IPR008996">
    <property type="entry name" value="IL1/FGF"/>
</dbReference>
<dbReference type="PANTHER" id="PTHR10078:SF30">
    <property type="entry name" value="INTERLEUKIN-1 BETA"/>
    <property type="match status" value="1"/>
</dbReference>
<dbReference type="PANTHER" id="PTHR10078">
    <property type="entry name" value="INTERLEUKIN-1 FAMILY MEMBER"/>
    <property type="match status" value="1"/>
</dbReference>
<dbReference type="Pfam" id="PF00340">
    <property type="entry name" value="IL1"/>
    <property type="match status" value="1"/>
</dbReference>
<dbReference type="Pfam" id="PF02394">
    <property type="entry name" value="IL1_propep"/>
    <property type="match status" value="1"/>
</dbReference>
<dbReference type="PRINTS" id="PR00262">
    <property type="entry name" value="IL1HBGF"/>
</dbReference>
<dbReference type="PRINTS" id="PR00264">
    <property type="entry name" value="INTERLEUKIN1"/>
</dbReference>
<dbReference type="PRINTS" id="PR01359">
    <property type="entry name" value="INTRLEUKIN1B"/>
</dbReference>
<dbReference type="PRINTS" id="PR01357">
    <property type="entry name" value="INTRLEUKN1AB"/>
</dbReference>
<dbReference type="SMART" id="SM00125">
    <property type="entry name" value="IL1"/>
    <property type="match status" value="1"/>
</dbReference>
<dbReference type="SUPFAM" id="SSF50353">
    <property type="entry name" value="Cytokine"/>
    <property type="match status" value="1"/>
</dbReference>
<dbReference type="PROSITE" id="PS00253">
    <property type="entry name" value="INTERLEUKIN_1"/>
    <property type="match status" value="1"/>
</dbReference>
<protein>
    <recommendedName>
        <fullName>Interleukin-1 beta</fullName>
        <shortName>IL-1 beta</shortName>
    </recommendedName>
</protein>
<gene>
    <name type="primary">IL1B</name>
</gene>
<accession>P26889</accession>
<keyword id="KW-0202">Cytokine</keyword>
<keyword id="KW-0963">Cytoplasm</keyword>
<keyword id="KW-0945">Host-virus interaction</keyword>
<keyword id="KW-0395">Inflammatory response</keyword>
<keyword id="KW-0458">Lysosome</keyword>
<keyword id="KW-0497">Mitogen</keyword>
<keyword id="KW-0666">Pyrogen</keyword>
<keyword id="KW-1185">Reference proteome</keyword>
<keyword id="KW-0964">Secreted</keyword>
<proteinExistence type="evidence at protein level"/>
<feature type="propeptide" id="PRO_0000015313" evidence="1">
    <location>
        <begin position="1"/>
        <end position="114"/>
    </location>
</feature>
<feature type="chain" id="PRO_0000015314" description="Interleukin-1 beta">
    <location>
        <begin position="115"/>
        <end position="267"/>
    </location>
</feature>
<feature type="site" description="Important for interaction with integrin" evidence="2">
    <location>
        <position position="169"/>
    </location>
</feature>
<feature type="site" description="Important for interaction with integrin" evidence="2">
    <location>
        <position position="177"/>
    </location>
</feature>
<feature type="site" description="Important for interaction with integrin" evidence="2">
    <location>
        <position position="179"/>
    </location>
</feature>
<feature type="site" description="Important for interaction with integrin" evidence="2">
    <location>
        <position position="188"/>
    </location>
</feature>
<feature type="site" description="Important for interaction with integrin" evidence="2">
    <location>
        <position position="202"/>
    </location>
</feature>